<organism>
    <name type="scientific">Bacillus cereus (strain VD045)</name>
    <dbReference type="NCBI Taxonomy" id="1053225"/>
    <lineage>
        <taxon>Bacteria</taxon>
        <taxon>Bacillati</taxon>
        <taxon>Bacillota</taxon>
        <taxon>Bacilli</taxon>
        <taxon>Bacillales</taxon>
        <taxon>Bacillaceae</taxon>
        <taxon>Bacillus</taxon>
        <taxon>Bacillus cereus group</taxon>
    </lineage>
</organism>
<evidence type="ECO:0000255" key="1">
    <source>
        <dbReference type="PROSITE-ProRule" id="PRU00560"/>
    </source>
</evidence>
<evidence type="ECO:0000269" key="2">
    <source>
    </source>
</evidence>
<evidence type="ECO:0000269" key="3">
    <source>
    </source>
</evidence>
<evidence type="ECO:0000269" key="4">
    <source>
    </source>
</evidence>
<evidence type="ECO:0000303" key="5">
    <source>
    </source>
</evidence>
<evidence type="ECO:0000305" key="6"/>
<evidence type="ECO:0000305" key="7">
    <source>
    </source>
</evidence>
<evidence type="ECO:0000305" key="8">
    <source>
    </source>
</evidence>
<evidence type="ECO:0000312" key="9">
    <source>
        <dbReference type="EMBL" id="EJR29743.1"/>
    </source>
</evidence>
<evidence type="ECO:0007744" key="10">
    <source>
        <dbReference type="PDB" id="8IUD"/>
    </source>
</evidence>
<evidence type="ECO:0007744" key="11">
    <source>
        <dbReference type="PDB" id="8SM3"/>
    </source>
</evidence>
<evidence type="ECO:0007744" key="12">
    <source>
        <dbReference type="PDB" id="8U7I"/>
    </source>
</evidence>
<evidence type="ECO:0007829" key="13">
    <source>
        <dbReference type="PDB" id="8IUD"/>
    </source>
</evidence>
<evidence type="ECO:0007829" key="14">
    <source>
        <dbReference type="PDB" id="8JQB"/>
    </source>
</evidence>
<evidence type="ECO:0007829" key="15">
    <source>
        <dbReference type="PDB" id="8SM3"/>
    </source>
</evidence>
<evidence type="ECO:0007829" key="16">
    <source>
        <dbReference type="PDB" id="8TJY"/>
    </source>
</evidence>
<evidence type="ECO:0007829" key="17">
    <source>
        <dbReference type="PDB" id="8X5N"/>
    </source>
</evidence>
<keyword id="KW-0002">3D-structure</keyword>
<keyword id="KW-0051">Antiviral defense</keyword>
<keyword id="KW-0067">ATP-binding</keyword>
<keyword id="KW-0347">Helicase</keyword>
<keyword id="KW-0945">Host-virus interaction</keyword>
<keyword id="KW-0378">Hydrolase</keyword>
<keyword id="KW-0547">Nucleotide-binding</keyword>
<gene>
    <name evidence="5" type="primary">gajB</name>
    <name evidence="9" type="ORF">IIE_04983</name>
</gene>
<sequence length="494" mass="57072">MSREQIIKDGGNILVTAGAGSGKTTILVSKIEADLKENKTHYSIAAVTFTNKAAKEIEGRLGYSSRGNFIGTNDGFVESEIIRPFIKDAFGNDYPDNFTAEYFDNQFASYDKGLQVLKYQNILGTYSNPKKNFKFQLALDILKKSLVARQYIFSKYFKIFIDEYQDSDKDMHNLFMYLKDQLKIKLFIVGDPKQSIYIWRGAEPENFNGLIENSTDFNKYHLTSNFRCCQDIQNYSNLFNEETRSLIKEKNEVQNVISIADDMPISDILLKLTEEKQVLNIEAELVILVRRRNQAIEIMKELNEEGFNFIFIPQTPLDRATPNATLLKEVIKYVKNDRYSIYDLAAEIVGNLSSREIKEIQKIINELLVPNINQVLINQVLINLFAKLEITLDTREITAFTEVMMTNEFDIAFDTNEYLHKIFTVHSAKGLEFNQVIITASDYNVHYNRDTNEHYVATTRAKDKLIVIMDNKKYSDYIETLMKELKIKNIIKSI</sequence>
<feature type="chain" id="PRO_0000456383" description="Gabija protein GajB">
    <location>
        <begin position="1"/>
        <end position="494"/>
    </location>
</feature>
<feature type="domain" description="UvrD-like helicase ATP-binding" evidence="1">
    <location>
        <begin position="1"/>
        <end position="229"/>
    </location>
</feature>
<feature type="binding site" evidence="1">
    <location>
        <begin position="17"/>
        <end position="24"/>
    </location>
    <ligand>
        <name>ATP</name>
        <dbReference type="ChEBI" id="CHEBI:30616"/>
    </ligand>
</feature>
<feature type="site" description="Interaction with GajA" evidence="4">
    <location>
        <position position="147"/>
    </location>
</feature>
<feature type="site" description="Interaction with GajA" evidence="4">
    <location>
        <position position="150"/>
    </location>
</feature>
<feature type="helix" evidence="13">
    <location>
        <begin position="4"/>
        <end position="8"/>
    </location>
</feature>
<feature type="strand" evidence="13">
    <location>
        <begin position="13"/>
        <end position="16"/>
    </location>
</feature>
<feature type="strand" evidence="17">
    <location>
        <begin position="19"/>
        <end position="22"/>
    </location>
</feature>
<feature type="helix" evidence="13">
    <location>
        <begin position="28"/>
        <end position="37"/>
    </location>
</feature>
<feature type="strand" evidence="13">
    <location>
        <begin position="43"/>
        <end position="50"/>
    </location>
</feature>
<feature type="helix" evidence="13">
    <location>
        <begin position="51"/>
        <end position="60"/>
    </location>
</feature>
<feature type="strand" evidence="13">
    <location>
        <begin position="69"/>
        <end position="72"/>
    </location>
</feature>
<feature type="helix" evidence="13">
    <location>
        <begin position="73"/>
        <end position="80"/>
    </location>
</feature>
<feature type="helix" evidence="13">
    <location>
        <begin position="82"/>
        <end position="90"/>
    </location>
</feature>
<feature type="strand" evidence="13">
    <location>
        <begin position="102"/>
        <end position="104"/>
    </location>
</feature>
<feature type="strand" evidence="13">
    <location>
        <begin position="106"/>
        <end position="109"/>
    </location>
</feature>
<feature type="helix" evidence="13">
    <location>
        <begin position="110"/>
        <end position="120"/>
    </location>
</feature>
<feature type="strand" evidence="15">
    <location>
        <begin position="122"/>
        <end position="124"/>
    </location>
</feature>
<feature type="strand" evidence="13">
    <location>
        <begin position="125"/>
        <end position="128"/>
    </location>
</feature>
<feature type="helix" evidence="13">
    <location>
        <begin position="133"/>
        <end position="144"/>
    </location>
</feature>
<feature type="helix" evidence="13">
    <location>
        <begin position="146"/>
        <end position="155"/>
    </location>
</feature>
<feature type="strand" evidence="13">
    <location>
        <begin position="156"/>
        <end position="161"/>
    </location>
</feature>
<feature type="helix" evidence="13">
    <location>
        <begin position="164"/>
        <end position="166"/>
    </location>
</feature>
<feature type="helix" evidence="13">
    <location>
        <begin position="169"/>
        <end position="181"/>
    </location>
</feature>
<feature type="strand" evidence="13">
    <location>
        <begin position="185"/>
        <end position="190"/>
    </location>
</feature>
<feature type="strand" evidence="14">
    <location>
        <begin position="193"/>
        <end position="195"/>
    </location>
</feature>
<feature type="helix" evidence="16">
    <location>
        <begin position="196"/>
        <end position="200"/>
    </location>
</feature>
<feature type="helix" evidence="13">
    <location>
        <begin position="205"/>
        <end position="213"/>
    </location>
</feature>
<feature type="strand" evidence="13">
    <location>
        <begin position="218"/>
        <end position="221"/>
    </location>
</feature>
<feature type="helix" evidence="13">
    <location>
        <begin position="224"/>
        <end position="227"/>
    </location>
</feature>
<feature type="helix" evidence="13">
    <location>
        <begin position="230"/>
        <end position="237"/>
    </location>
</feature>
<feature type="helix" evidence="13">
    <location>
        <begin position="241"/>
        <end position="246"/>
    </location>
</feature>
<feature type="strand" evidence="13">
    <location>
        <begin position="255"/>
        <end position="260"/>
    </location>
</feature>
<feature type="strand" evidence="14">
    <location>
        <begin position="261"/>
        <end position="263"/>
    </location>
</feature>
<feature type="helix" evidence="13">
    <location>
        <begin position="265"/>
        <end position="273"/>
    </location>
</feature>
<feature type="strand" evidence="15">
    <location>
        <begin position="281"/>
        <end position="283"/>
    </location>
</feature>
<feature type="strand" evidence="13">
    <location>
        <begin position="285"/>
        <end position="291"/>
    </location>
</feature>
<feature type="helix" evidence="13">
    <location>
        <begin position="292"/>
        <end position="302"/>
    </location>
</feature>
<feature type="turn" evidence="13">
    <location>
        <begin position="303"/>
        <end position="306"/>
    </location>
</feature>
<feature type="strand" evidence="13">
    <location>
        <begin position="310"/>
        <end position="312"/>
    </location>
</feature>
<feature type="helix" evidence="14">
    <location>
        <begin position="316"/>
        <end position="318"/>
    </location>
</feature>
<feature type="helix" evidence="13">
    <location>
        <begin position="324"/>
        <end position="335"/>
    </location>
</feature>
<feature type="strand" evidence="15">
    <location>
        <begin position="337"/>
        <end position="339"/>
    </location>
</feature>
<feature type="helix" evidence="13">
    <location>
        <begin position="341"/>
        <end position="346"/>
    </location>
</feature>
<feature type="strand" evidence="13">
    <location>
        <begin position="348"/>
        <end position="350"/>
    </location>
</feature>
<feature type="helix" evidence="13">
    <location>
        <begin position="354"/>
        <end position="364"/>
    </location>
</feature>
<feature type="helix" evidence="13">
    <location>
        <begin position="365"/>
        <end position="368"/>
    </location>
</feature>
<feature type="strand" evidence="13">
    <location>
        <begin position="369"/>
        <end position="371"/>
    </location>
</feature>
<feature type="helix" evidence="13">
    <location>
        <begin position="374"/>
        <end position="387"/>
    </location>
</feature>
<feature type="helix" evidence="13">
    <location>
        <begin position="394"/>
        <end position="404"/>
    </location>
</feature>
<feature type="helix" evidence="14">
    <location>
        <begin position="405"/>
        <end position="407"/>
    </location>
</feature>
<feature type="helix" evidence="13">
    <location>
        <begin position="410"/>
        <end position="413"/>
    </location>
</feature>
<feature type="strand" evidence="13">
    <location>
        <begin position="419"/>
        <end position="424"/>
    </location>
</feature>
<feature type="helix" evidence="13">
    <location>
        <begin position="425"/>
        <end position="428"/>
    </location>
</feature>
<feature type="strand" evidence="15">
    <location>
        <begin position="429"/>
        <end position="431"/>
    </location>
</feature>
<feature type="strand" evidence="13">
    <location>
        <begin position="433"/>
        <end position="439"/>
    </location>
</feature>
<feature type="helix" evidence="13">
    <location>
        <begin position="440"/>
        <end position="442"/>
    </location>
</feature>
<feature type="helix" evidence="13">
    <location>
        <begin position="445"/>
        <end position="447"/>
    </location>
</feature>
<feature type="helix" evidence="13">
    <location>
        <begin position="451"/>
        <end position="458"/>
    </location>
</feature>
<feature type="strand" evidence="13">
    <location>
        <begin position="460"/>
        <end position="469"/>
    </location>
</feature>
<feature type="helix" evidence="13">
    <location>
        <begin position="472"/>
        <end position="485"/>
    </location>
</feature>
<feature type="strand" evidence="13">
    <location>
        <begin position="490"/>
        <end position="494"/>
    </location>
</feature>
<reference evidence="9" key="1">
    <citation type="submission" date="2012-04" db="EMBL/GenBank/DDBJ databases">
        <title>The Genome Sequence of Bacillus cereus VD045.</title>
        <authorList>
            <consortium name="The Broad Institute Genome Sequencing Platform"/>
            <consortium name="The Broad Institute Genome Sequencing Center for Infectious Disease"/>
            <person name="Feldgarden M."/>
            <person name="Van der Auwera G.A."/>
            <person name="Mahillon J."/>
            <person name="Duprez V."/>
            <person name="Timmery S."/>
            <person name="Mattelet C."/>
            <person name="Dierick K."/>
            <person name="Sun M."/>
            <person name="Yu Z."/>
            <person name="Zhu L."/>
            <person name="Hu X."/>
            <person name="Shank E.B."/>
            <person name="Swiecicka I."/>
            <person name="Hansen B.M."/>
            <person name="Andrup L."/>
            <person name="Young S.K."/>
            <person name="Zeng Q."/>
            <person name="Gargeya S."/>
            <person name="Fitzgerald M."/>
            <person name="Haas B."/>
            <person name="Abouelleil A."/>
            <person name="Alvarado L."/>
            <person name="Arachchi H.M."/>
            <person name="Berlin A."/>
            <person name="Chapman S.B."/>
            <person name="Goldberg J."/>
            <person name="Griggs A."/>
            <person name="Gujja S."/>
            <person name="Hansen M."/>
            <person name="Howarth C."/>
            <person name="Imamovic A."/>
            <person name="Larimer J."/>
            <person name="McCowen C."/>
            <person name="Montmayeur A."/>
            <person name="Murphy C."/>
            <person name="Neiman D."/>
            <person name="Pearson M."/>
            <person name="Priest M."/>
            <person name="Roberts A."/>
            <person name="Saif S."/>
            <person name="Shea T."/>
            <person name="Sisk P."/>
            <person name="Sykes S."/>
            <person name="Wortman J."/>
            <person name="Nusbaum C."/>
            <person name="Birren B."/>
        </authorList>
    </citation>
    <scope>NUCLEOTIDE SEQUENCE [LARGE SCALE GENOMIC DNA]</scope>
    <source>
        <strain>VD045</strain>
    </source>
</reference>
<reference key="2">
    <citation type="journal article" date="2018" name="Science">
        <title>Systematic discovery of antiphage defense systems in the microbial pangenome.</title>
        <authorList>
            <person name="Doron S."/>
            <person name="Melamed S."/>
            <person name="Ofir G."/>
            <person name="Leavitt A."/>
            <person name="Lopatina A."/>
            <person name="Keren M."/>
            <person name="Amitai G."/>
            <person name="Sorek R."/>
        </authorList>
    </citation>
    <scope>FUNCTION</scope>
    <scope>DISRUPTION PHENOTYPE</scope>
    <scope>EXPRESSION IN B.SUBTILIS</scope>
    <source>
        <strain>VD045</strain>
    </source>
</reference>
<reference key="3">
    <citation type="journal article" date="2021" name="Nucleic Acids Res.">
        <title>A nucleotide-sensing endonuclease from the Gabija bacterial defense system.</title>
        <authorList>
            <person name="Cheng R."/>
            <person name="Huang F."/>
            <person name="Wu H."/>
            <person name="Lu X."/>
            <person name="Yan Y."/>
            <person name="Yu B."/>
            <person name="Wang X."/>
            <person name="Zhu B."/>
        </authorList>
    </citation>
    <scope>FUNCTION IN VIRUS DEFENSE</scope>
    <scope>EXPRESSION IN E.COLI</scope>
    <source>
        <strain>VD045</strain>
    </source>
</reference>
<reference evidence="10" key="4">
    <citation type="journal article" date="2023" name="Nucleic Acids Res.">
        <title>Structural and functional investigation of GajB protein in Gabija anti-phage defense.</title>
        <authorList>
            <person name="Oh H."/>
            <person name="Koo J."/>
            <person name="An S.Y."/>
            <person name="Hong S.H."/>
            <person name="Suh J.Y."/>
            <person name="Bae E."/>
        </authorList>
    </citation>
    <scope>STRUCTURE BY ELECTRON MICROSCOPY (2.0 ANGSTROMS)</scope>
</reference>
<reference evidence="11 12" key="5">
    <citation type="journal article" date="2024" name="Nature">
        <title>Structural basis of Gabija anti-phage defence and viral immune evasion.</title>
        <authorList>
            <person name="Antine S.P."/>
            <person name="Johnson A.G."/>
            <person name="Mooney S.E."/>
            <person name="Leavitt A."/>
            <person name="Mayer M.L."/>
            <person name="Yirmiya E."/>
            <person name="Amitai G."/>
            <person name="Sorek R."/>
            <person name="Kranzusch P.J."/>
        </authorList>
    </citation>
    <scope>STRUCTURE BY ELECTRON MICROSCOPY (2.57 ANGSTROMS)</scope>
    <scope>SUBUNIT</scope>
    <scope>INTERACTION AS A GAJAB COMPLEX WITH BACILLUS PHAGE PHI3T GAD1</scope>
</reference>
<accession>J8HQ06</accession>
<dbReference type="EMBL" id="AHET01000033">
    <property type="protein sequence ID" value="EJR29743.1"/>
    <property type="molecule type" value="Genomic_DNA"/>
</dbReference>
<dbReference type="RefSeq" id="WP_002164682.1">
    <property type="nucleotide sequence ID" value="NZ_JH792082.1"/>
</dbReference>
<dbReference type="PDB" id="8IUD">
    <property type="method" value="X-ray"/>
    <property type="resolution" value="2.00 A"/>
    <property type="chains" value="A=1-494"/>
</dbReference>
<dbReference type="PDB" id="8J4T">
    <property type="method" value="EM"/>
    <property type="resolution" value="3.60 A"/>
    <property type="chains" value="E/F/G/H=1-494"/>
</dbReference>
<dbReference type="PDB" id="8JQB">
    <property type="method" value="EM"/>
    <property type="resolution" value="3.20 A"/>
    <property type="chains" value="E/F/G/H=1-494"/>
</dbReference>
<dbReference type="PDB" id="8JQC">
    <property type="method" value="EM"/>
    <property type="resolution" value="3.39 A"/>
    <property type="chains" value="E=1-494"/>
</dbReference>
<dbReference type="PDB" id="8SM3">
    <property type="method" value="X-ray"/>
    <property type="resolution" value="3.00 A"/>
    <property type="chains" value="B=2-494"/>
</dbReference>
<dbReference type="PDB" id="8TJY">
    <property type="method" value="EM"/>
    <property type="resolution" value="2.79 A"/>
    <property type="chains" value="B/D/F/H=1-494"/>
</dbReference>
<dbReference type="PDB" id="8TK1">
    <property type="method" value="EM"/>
    <property type="resolution" value="2.98 A"/>
    <property type="chains" value="B/D/F/H=1-494"/>
</dbReference>
<dbReference type="PDB" id="8U7I">
    <property type="method" value="EM"/>
    <property type="resolution" value="2.57 A"/>
    <property type="chains" value="E/F/G/H=1-494"/>
</dbReference>
<dbReference type="PDB" id="8X5N">
    <property type="method" value="EM"/>
    <property type="resolution" value="2.80 A"/>
    <property type="chains" value="E/F/G/H=1-494"/>
</dbReference>
<dbReference type="PDBsum" id="8IUD"/>
<dbReference type="PDBsum" id="8J4T"/>
<dbReference type="PDBsum" id="8JQB"/>
<dbReference type="PDBsum" id="8JQC"/>
<dbReference type="PDBsum" id="8SM3"/>
<dbReference type="PDBsum" id="8TJY"/>
<dbReference type="PDBsum" id="8TK1"/>
<dbReference type="PDBsum" id="8U7I"/>
<dbReference type="PDBsum" id="8X5N"/>
<dbReference type="EMDB" id="EMD-35977"/>
<dbReference type="EMDB" id="EMD-36563"/>
<dbReference type="EMDB" id="EMD-36569"/>
<dbReference type="EMDB" id="EMD-38071"/>
<dbReference type="EMDB" id="EMD-41314"/>
<dbReference type="EMDB" id="EMD-41321"/>
<dbReference type="EMDB" id="EMD-41983"/>
<dbReference type="SMR" id="J8HQ06"/>
<dbReference type="PATRIC" id="fig|1053225.3.peg.5073"/>
<dbReference type="HOGENOM" id="CLU_034932_0_0_9"/>
<dbReference type="GO" id="GO:0043138">
    <property type="term" value="F:3'-5' DNA helicase activity"/>
    <property type="evidence" value="ECO:0007669"/>
    <property type="project" value="TreeGrafter"/>
</dbReference>
<dbReference type="GO" id="GO:0005524">
    <property type="term" value="F:ATP binding"/>
    <property type="evidence" value="ECO:0007669"/>
    <property type="project" value="UniProtKB-KW"/>
</dbReference>
<dbReference type="GO" id="GO:0003677">
    <property type="term" value="F:DNA binding"/>
    <property type="evidence" value="ECO:0007669"/>
    <property type="project" value="InterPro"/>
</dbReference>
<dbReference type="GO" id="GO:0016787">
    <property type="term" value="F:hydrolase activity"/>
    <property type="evidence" value="ECO:0007669"/>
    <property type="project" value="UniProtKB-KW"/>
</dbReference>
<dbReference type="GO" id="GO:0051607">
    <property type="term" value="P:defense response to virus"/>
    <property type="evidence" value="ECO:0007669"/>
    <property type="project" value="UniProtKB-KW"/>
</dbReference>
<dbReference type="GO" id="GO:0000725">
    <property type="term" value="P:recombinational repair"/>
    <property type="evidence" value="ECO:0007669"/>
    <property type="project" value="TreeGrafter"/>
</dbReference>
<dbReference type="CDD" id="cd17932">
    <property type="entry name" value="DEXQc_UvrD"/>
    <property type="match status" value="1"/>
</dbReference>
<dbReference type="Gene3D" id="3.40.50.300">
    <property type="entry name" value="P-loop containing nucleotide triphosphate hydrolases"/>
    <property type="match status" value="2"/>
</dbReference>
<dbReference type="InterPro" id="IPR000212">
    <property type="entry name" value="DNA_helicase_UvrD/REP"/>
</dbReference>
<dbReference type="InterPro" id="IPR027417">
    <property type="entry name" value="P-loop_NTPase"/>
</dbReference>
<dbReference type="InterPro" id="IPR014016">
    <property type="entry name" value="UvrD-like_ATP-bd"/>
</dbReference>
<dbReference type="InterPro" id="IPR027785">
    <property type="entry name" value="UvrD-like_helicase_C"/>
</dbReference>
<dbReference type="PANTHER" id="PTHR11070:SF2">
    <property type="entry name" value="ATP-DEPENDENT DNA HELICASE SRS2"/>
    <property type="match status" value="1"/>
</dbReference>
<dbReference type="PANTHER" id="PTHR11070">
    <property type="entry name" value="UVRD / RECB / PCRA DNA HELICASE FAMILY MEMBER"/>
    <property type="match status" value="1"/>
</dbReference>
<dbReference type="Pfam" id="PF13245">
    <property type="entry name" value="AAA_19"/>
    <property type="match status" value="1"/>
</dbReference>
<dbReference type="Pfam" id="PF13538">
    <property type="entry name" value="UvrD_C_2"/>
    <property type="match status" value="1"/>
</dbReference>
<dbReference type="SUPFAM" id="SSF52540">
    <property type="entry name" value="P-loop containing nucleoside triphosphate hydrolases"/>
    <property type="match status" value="1"/>
</dbReference>
<dbReference type="PROSITE" id="PS51198">
    <property type="entry name" value="UVRD_HELICASE_ATP_BIND"/>
    <property type="match status" value="1"/>
</dbReference>
<name>GAJB_BACC6</name>
<proteinExistence type="evidence at protein level"/>
<protein>
    <recommendedName>
        <fullName evidence="5">Gabija protein GajB</fullName>
    </recommendedName>
    <alternativeName>
        <fullName evidence="5">Putative helicase GajB</fullName>
    </alternativeName>
</protein>
<comment type="function">
    <text evidence="2 3 7 8">Component of antiviral defense system Gabija type I, composed of GajA and GajB. Expression of Gabija type I in B.subtilis (strain BEST7003) confers resistance to phages phi105, phi29, rho14, SpBeta and SBSphiC (PubMed:29371424). Expression of Gabija type I in E.coli B (strain ATCC 11303) confers resistance to phage T7 (PubMed:33885789). May be a helicase or contribute to GajA activation (Probable).</text>
</comment>
<comment type="subunit">
    <text evidence="4">Homodimer (PubMed:37992757). Interacts with GajA; 2 GajB dimers dock at opposite sides of the GajA complex to form a 4:4 GajA-GajB assembly (GajAB) (PubMed:37992757). GajAB interacts with Bacillus phage Phi3T Gad1 protein; this interaction forms a 4:4:8 GajAB-Gad1 complex and leads to GajAB inhibition (PubMed:37992757).</text>
</comment>
<comment type="domain">
    <text evidence="6">Contains a UvrD-like helicase domain.</text>
</comment>
<comment type="disruption phenotype">
    <text evidence="2 3">When this gene is missing the Gabija type I system does not confer resistance to SpBeta in B.subtilis (PubMed:29371424). When this gene is missing the Gabija type I system does not confer resistance to T7 in E.coli (PubMed:33885789).</text>
</comment>
<comment type="similarity">
    <text evidence="6">Belongs to the helicase family.</text>
</comment>